<evidence type="ECO:0000250" key="1"/>
<evidence type="ECO:0000255" key="2">
    <source>
        <dbReference type="PROSITE-ProRule" id="PRU00071"/>
    </source>
</evidence>
<evidence type="ECO:0000256" key="3">
    <source>
        <dbReference type="SAM" id="MobiDB-lite"/>
    </source>
</evidence>
<evidence type="ECO:0000305" key="4"/>
<keyword id="KW-0238">DNA-binding</keyword>
<keyword id="KW-0479">Metal-binding</keyword>
<keyword id="KW-0539">Nucleus</keyword>
<keyword id="KW-1185">Reference proteome</keyword>
<keyword id="KW-0804">Transcription</keyword>
<keyword id="KW-0805">Transcription regulation</keyword>
<keyword id="KW-0862">Zinc</keyword>
<keyword id="KW-0863">Zinc-finger</keyword>
<sequence length="260" mass="29679">MLPYIGHNSYQQHQFPLPEMEIPEKWKLSYEQEAITAPACPRCASSNTKFCYYNNYSLSQPRYFCKGCRRYWTKGGSLRNIPVGGGCRKRSRSRQNSHKRFGRNENRPDGLINQDDGFQSSPPGSDIDLAAVFAQYVTDRSPSSTDNTTGSDQDSPITTTTHALESLSWDICQETDVDLGFYGEFNNLTQKTKEDQEVFGQFLQEDREEIFEFQGLLDDKEIQEILECSFSEEPDQLVSQGSFMINGDNWSSTDLTRFGI</sequence>
<accession>P68349</accession>
<accession>Q1PFU5</accession>
<reference key="1">
    <citation type="journal article" date="2000" name="Nature">
        <title>Sequence and analysis of chromosome 1 of the plant Arabidopsis thaliana.</title>
        <authorList>
            <person name="Theologis A."/>
            <person name="Ecker J.R."/>
            <person name="Palm C.J."/>
            <person name="Federspiel N.A."/>
            <person name="Kaul S."/>
            <person name="White O."/>
            <person name="Alonso J."/>
            <person name="Altafi H."/>
            <person name="Araujo R."/>
            <person name="Bowman C.L."/>
            <person name="Brooks S.Y."/>
            <person name="Buehler E."/>
            <person name="Chan A."/>
            <person name="Chao Q."/>
            <person name="Chen H."/>
            <person name="Cheuk R.F."/>
            <person name="Chin C.W."/>
            <person name="Chung M.K."/>
            <person name="Conn L."/>
            <person name="Conway A.B."/>
            <person name="Conway A.R."/>
            <person name="Creasy T.H."/>
            <person name="Dewar K."/>
            <person name="Dunn P."/>
            <person name="Etgu P."/>
            <person name="Feldblyum T.V."/>
            <person name="Feng J.-D."/>
            <person name="Fong B."/>
            <person name="Fujii C.Y."/>
            <person name="Gill J.E."/>
            <person name="Goldsmith A.D."/>
            <person name="Haas B."/>
            <person name="Hansen N.F."/>
            <person name="Hughes B."/>
            <person name="Huizar L."/>
            <person name="Hunter J.L."/>
            <person name="Jenkins J."/>
            <person name="Johnson-Hopson C."/>
            <person name="Khan S."/>
            <person name="Khaykin E."/>
            <person name="Kim C.J."/>
            <person name="Koo H.L."/>
            <person name="Kremenetskaia I."/>
            <person name="Kurtz D.B."/>
            <person name="Kwan A."/>
            <person name="Lam B."/>
            <person name="Langin-Hooper S."/>
            <person name="Lee A."/>
            <person name="Lee J.M."/>
            <person name="Lenz C.A."/>
            <person name="Li J.H."/>
            <person name="Li Y.-P."/>
            <person name="Lin X."/>
            <person name="Liu S.X."/>
            <person name="Liu Z.A."/>
            <person name="Luros J.S."/>
            <person name="Maiti R."/>
            <person name="Marziali A."/>
            <person name="Militscher J."/>
            <person name="Miranda M."/>
            <person name="Nguyen M."/>
            <person name="Nierman W.C."/>
            <person name="Osborne B.I."/>
            <person name="Pai G."/>
            <person name="Peterson J."/>
            <person name="Pham P.K."/>
            <person name="Rizzo M."/>
            <person name="Rooney T."/>
            <person name="Rowley D."/>
            <person name="Sakano H."/>
            <person name="Salzberg S.L."/>
            <person name="Schwartz J.R."/>
            <person name="Shinn P."/>
            <person name="Southwick A.M."/>
            <person name="Sun H."/>
            <person name="Tallon L.J."/>
            <person name="Tambunga G."/>
            <person name="Toriumi M.J."/>
            <person name="Town C.D."/>
            <person name="Utterback T."/>
            <person name="Van Aken S."/>
            <person name="Vaysberg M."/>
            <person name="Vysotskaia V.S."/>
            <person name="Walker M."/>
            <person name="Wu D."/>
            <person name="Yu G."/>
            <person name="Fraser C.M."/>
            <person name="Venter J.C."/>
            <person name="Davis R.W."/>
        </authorList>
    </citation>
    <scope>NUCLEOTIDE SEQUENCE [LARGE SCALE GENOMIC DNA]</scope>
    <source>
        <strain>cv. Columbia</strain>
    </source>
</reference>
<reference key="2">
    <citation type="journal article" date="2017" name="Plant J.">
        <title>Araport11: a complete reannotation of the Arabidopsis thaliana reference genome.</title>
        <authorList>
            <person name="Cheng C.Y."/>
            <person name="Krishnakumar V."/>
            <person name="Chan A.P."/>
            <person name="Thibaud-Nissen F."/>
            <person name="Schobel S."/>
            <person name="Town C.D."/>
        </authorList>
    </citation>
    <scope>GENOME REANNOTATION</scope>
    <source>
        <strain>cv. Columbia</strain>
    </source>
</reference>
<reference key="3">
    <citation type="journal article" date="2006" name="Plant Biotechnol. J.">
        <title>Simultaneous high-throughput recombinational cloning of open reading frames in closed and open configurations.</title>
        <authorList>
            <person name="Underwood B.A."/>
            <person name="Vanderhaeghen R."/>
            <person name="Whitford R."/>
            <person name="Town C.D."/>
            <person name="Hilson P."/>
        </authorList>
    </citation>
    <scope>NUCLEOTIDE SEQUENCE [LARGE SCALE MRNA]</scope>
    <source>
        <strain>cv. Columbia</strain>
    </source>
</reference>
<reference key="4">
    <citation type="journal article" date="2002" name="Trends Plant Sci.">
        <title>The Dof family of plant transcription factors.</title>
        <authorList>
            <person name="Yanagisawa S."/>
        </authorList>
    </citation>
    <scope>GENE FAMILY</scope>
    <scope>NOMENCLATURE</scope>
</reference>
<comment type="function">
    <text evidence="1">Transcription factor that binds specifically to a 5'-AA[AG]G-3' consensus core sequence.</text>
</comment>
<comment type="subcellular location">
    <subcellularLocation>
        <location evidence="4">Nucleus</location>
    </subcellularLocation>
</comment>
<name>DOF12_ARATH</name>
<organism>
    <name type="scientific">Arabidopsis thaliana</name>
    <name type="common">Mouse-ear cress</name>
    <dbReference type="NCBI Taxonomy" id="3702"/>
    <lineage>
        <taxon>Eukaryota</taxon>
        <taxon>Viridiplantae</taxon>
        <taxon>Streptophyta</taxon>
        <taxon>Embryophyta</taxon>
        <taxon>Tracheophyta</taxon>
        <taxon>Spermatophyta</taxon>
        <taxon>Magnoliopsida</taxon>
        <taxon>eudicotyledons</taxon>
        <taxon>Gunneridae</taxon>
        <taxon>Pentapetalae</taxon>
        <taxon>rosids</taxon>
        <taxon>malvids</taxon>
        <taxon>Brassicales</taxon>
        <taxon>Brassicaceae</taxon>
        <taxon>Camelineae</taxon>
        <taxon>Arabidopsis</taxon>
    </lineage>
</organism>
<proteinExistence type="evidence at transcript level"/>
<dbReference type="EMBL" id="AC015447">
    <property type="status" value="NOT_ANNOTATED_CDS"/>
    <property type="molecule type" value="Genomic_DNA"/>
</dbReference>
<dbReference type="EMBL" id="CP002684">
    <property type="protein sequence ID" value="AEE30089.1"/>
    <property type="molecule type" value="Genomic_DNA"/>
</dbReference>
<dbReference type="EMBL" id="DQ446268">
    <property type="protein sequence ID" value="ABE65637.1"/>
    <property type="molecule type" value="mRNA"/>
</dbReference>
<dbReference type="RefSeq" id="NP_173556.1">
    <property type="nucleotide sequence ID" value="NM_101986.2"/>
</dbReference>
<dbReference type="BioGRID" id="23972">
    <property type="interactions" value="1"/>
</dbReference>
<dbReference type="FunCoup" id="P68349">
    <property type="interactions" value="19"/>
</dbReference>
<dbReference type="IntAct" id="P68349">
    <property type="interactions" value="1"/>
</dbReference>
<dbReference type="STRING" id="3702.P68349"/>
<dbReference type="PaxDb" id="3702-AT1G21340.1"/>
<dbReference type="EnsemblPlants" id="AT1G21340.1">
    <property type="protein sequence ID" value="AT1G21340.1"/>
    <property type="gene ID" value="AT1G21340"/>
</dbReference>
<dbReference type="GeneID" id="838733"/>
<dbReference type="Gramene" id="AT1G21340.1">
    <property type="protein sequence ID" value="AT1G21340.1"/>
    <property type="gene ID" value="AT1G21340"/>
</dbReference>
<dbReference type="KEGG" id="ath:AT1G21340"/>
<dbReference type="Araport" id="AT1G21340"/>
<dbReference type="TAIR" id="AT1G21340"/>
<dbReference type="eggNOG" id="ENOG502RYFS">
    <property type="taxonomic scope" value="Eukaryota"/>
</dbReference>
<dbReference type="HOGENOM" id="CLU_036438_3_0_1"/>
<dbReference type="InParanoid" id="P68349"/>
<dbReference type="OMA" id="NGDNWSS"/>
<dbReference type="OrthoDB" id="1927254at2759"/>
<dbReference type="PhylomeDB" id="P68349"/>
<dbReference type="PRO" id="PR:P68349"/>
<dbReference type="Proteomes" id="UP000006548">
    <property type="component" value="Chromosome 1"/>
</dbReference>
<dbReference type="ExpressionAtlas" id="P68349">
    <property type="expression patterns" value="baseline and differential"/>
</dbReference>
<dbReference type="GO" id="GO:0005634">
    <property type="term" value="C:nucleus"/>
    <property type="evidence" value="ECO:0007669"/>
    <property type="project" value="UniProtKB-SubCell"/>
</dbReference>
<dbReference type="GO" id="GO:0003677">
    <property type="term" value="F:DNA binding"/>
    <property type="evidence" value="ECO:0007669"/>
    <property type="project" value="UniProtKB-KW"/>
</dbReference>
<dbReference type="GO" id="GO:0003700">
    <property type="term" value="F:DNA-binding transcription factor activity"/>
    <property type="evidence" value="ECO:0000250"/>
    <property type="project" value="TAIR"/>
</dbReference>
<dbReference type="GO" id="GO:0008270">
    <property type="term" value="F:zinc ion binding"/>
    <property type="evidence" value="ECO:0007669"/>
    <property type="project" value="UniProtKB-KW"/>
</dbReference>
<dbReference type="GO" id="GO:0006355">
    <property type="term" value="P:regulation of DNA-templated transcription"/>
    <property type="evidence" value="ECO:0000304"/>
    <property type="project" value="TAIR"/>
</dbReference>
<dbReference type="InterPro" id="IPR045174">
    <property type="entry name" value="Dof"/>
</dbReference>
<dbReference type="InterPro" id="IPR003851">
    <property type="entry name" value="Znf_Dof"/>
</dbReference>
<dbReference type="PANTHER" id="PTHR31992:SF316">
    <property type="entry name" value="DOF ZINC FINGER PROTEIN DOF1.2"/>
    <property type="match status" value="1"/>
</dbReference>
<dbReference type="PANTHER" id="PTHR31992">
    <property type="entry name" value="DOF ZINC FINGER PROTEIN DOF1.4-RELATED"/>
    <property type="match status" value="1"/>
</dbReference>
<dbReference type="Pfam" id="PF02701">
    <property type="entry name" value="Zn_ribbon_Dof"/>
    <property type="match status" value="1"/>
</dbReference>
<dbReference type="PROSITE" id="PS01361">
    <property type="entry name" value="ZF_DOF_1"/>
    <property type="match status" value="1"/>
</dbReference>
<dbReference type="PROSITE" id="PS50884">
    <property type="entry name" value="ZF_DOF_2"/>
    <property type="match status" value="1"/>
</dbReference>
<gene>
    <name type="primary">DOF1.2</name>
    <name type="ordered locus">At1g21340</name>
    <name type="ORF">F24J8.23</name>
</gene>
<protein>
    <recommendedName>
        <fullName>Dof zinc finger protein DOF1.2</fullName>
        <shortName>AtDOF1.2</shortName>
    </recommendedName>
</protein>
<feature type="chain" id="PRO_0000074264" description="Dof zinc finger protein DOF1.2">
    <location>
        <begin position="1"/>
        <end position="260"/>
    </location>
</feature>
<feature type="zinc finger region" description="Dof-type" evidence="2">
    <location>
        <begin position="38"/>
        <end position="92"/>
    </location>
</feature>
<feature type="region of interest" description="Disordered" evidence="3">
    <location>
        <begin position="83"/>
        <end position="124"/>
    </location>
</feature>
<feature type="compositionally biased region" description="Basic residues" evidence="3">
    <location>
        <begin position="87"/>
        <end position="101"/>
    </location>
</feature>
<feature type="binding site" evidence="2">
    <location>
        <position position="40"/>
    </location>
    <ligand>
        <name>Zn(2+)</name>
        <dbReference type="ChEBI" id="CHEBI:29105"/>
    </ligand>
</feature>
<feature type="binding site" evidence="2">
    <location>
        <position position="43"/>
    </location>
    <ligand>
        <name>Zn(2+)</name>
        <dbReference type="ChEBI" id="CHEBI:29105"/>
    </ligand>
</feature>
<feature type="binding site" evidence="2">
    <location>
        <position position="65"/>
    </location>
    <ligand>
        <name>Zn(2+)</name>
        <dbReference type="ChEBI" id="CHEBI:29105"/>
    </ligand>
</feature>
<feature type="binding site" evidence="2">
    <location>
        <position position="68"/>
    </location>
    <ligand>
        <name>Zn(2+)</name>
        <dbReference type="ChEBI" id="CHEBI:29105"/>
    </ligand>
</feature>